<comment type="subcellular location">
    <subcellularLocation>
        <location evidence="1">Membrane</location>
        <topology evidence="1">Single-pass membrane protein</topology>
    </subcellularLocation>
</comment>
<comment type="similarity">
    <text evidence="1">Belongs to the UPF0154 family.</text>
</comment>
<feature type="chain" id="PRO_0000214958" description="UPF0154 protein BC_3680">
    <location>
        <begin position="1"/>
        <end position="73"/>
    </location>
</feature>
<feature type="transmembrane region" description="Helical" evidence="1">
    <location>
        <begin position="4"/>
        <end position="26"/>
    </location>
</feature>
<dbReference type="EMBL" id="AE016877">
    <property type="protein sequence ID" value="AAP10609.1"/>
    <property type="molecule type" value="Genomic_DNA"/>
</dbReference>
<dbReference type="RefSeq" id="NP_833408.1">
    <property type="nucleotide sequence ID" value="NC_004722.1"/>
</dbReference>
<dbReference type="RefSeq" id="WP_001123317.1">
    <property type="nucleotide sequence ID" value="NZ_CP138336.1"/>
</dbReference>
<dbReference type="SMR" id="Q812Y8"/>
<dbReference type="STRING" id="226900.BC_3680"/>
<dbReference type="MetOSite" id="Q812Y8"/>
<dbReference type="KEGG" id="bce:BC3680"/>
<dbReference type="PATRIC" id="fig|226900.8.peg.3784"/>
<dbReference type="HOGENOM" id="CLU_180108_0_1_9"/>
<dbReference type="Proteomes" id="UP000001417">
    <property type="component" value="Chromosome"/>
</dbReference>
<dbReference type="GO" id="GO:0005886">
    <property type="term" value="C:plasma membrane"/>
    <property type="evidence" value="ECO:0007669"/>
    <property type="project" value="UniProtKB-UniRule"/>
</dbReference>
<dbReference type="HAMAP" id="MF_00363">
    <property type="entry name" value="UPF0154"/>
    <property type="match status" value="1"/>
</dbReference>
<dbReference type="InterPro" id="IPR005359">
    <property type="entry name" value="UPF0154"/>
</dbReference>
<dbReference type="NCBIfam" id="NF002503">
    <property type="entry name" value="PRK01844.1"/>
    <property type="match status" value="1"/>
</dbReference>
<dbReference type="Pfam" id="PF03672">
    <property type="entry name" value="UPF0154"/>
    <property type="match status" value="1"/>
</dbReference>
<organism>
    <name type="scientific">Bacillus cereus (strain ATCC 14579 / DSM 31 / CCUG 7414 / JCM 2152 / NBRC 15305 / NCIMB 9373 / NCTC 2599 / NRRL B-3711)</name>
    <dbReference type="NCBI Taxonomy" id="226900"/>
    <lineage>
        <taxon>Bacteria</taxon>
        <taxon>Bacillati</taxon>
        <taxon>Bacillota</taxon>
        <taxon>Bacilli</taxon>
        <taxon>Bacillales</taxon>
        <taxon>Bacillaceae</taxon>
        <taxon>Bacillus</taxon>
        <taxon>Bacillus cereus group</taxon>
    </lineage>
</organism>
<name>Y3680_BACCR</name>
<keyword id="KW-0472">Membrane</keyword>
<keyword id="KW-1185">Reference proteome</keyword>
<keyword id="KW-0812">Transmembrane</keyword>
<keyword id="KW-1133">Transmembrane helix</keyword>
<sequence length="73" mass="8380">MPIWLGILVGVVALVAGVALGFFIARKYMMNYLQKNPPINEQMLKMMMMQMGQKPSQKKINQMMSAMNKQQMK</sequence>
<evidence type="ECO:0000255" key="1">
    <source>
        <dbReference type="HAMAP-Rule" id="MF_00363"/>
    </source>
</evidence>
<protein>
    <recommendedName>
        <fullName evidence="1">UPF0154 protein BC_3680</fullName>
    </recommendedName>
</protein>
<gene>
    <name type="ordered locus">BC_3680</name>
</gene>
<reference key="1">
    <citation type="journal article" date="2003" name="Nature">
        <title>Genome sequence of Bacillus cereus and comparative analysis with Bacillus anthracis.</title>
        <authorList>
            <person name="Ivanova N."/>
            <person name="Sorokin A."/>
            <person name="Anderson I."/>
            <person name="Galleron N."/>
            <person name="Candelon B."/>
            <person name="Kapatral V."/>
            <person name="Bhattacharyya A."/>
            <person name="Reznik G."/>
            <person name="Mikhailova N."/>
            <person name="Lapidus A."/>
            <person name="Chu L."/>
            <person name="Mazur M."/>
            <person name="Goltsman E."/>
            <person name="Larsen N."/>
            <person name="D'Souza M."/>
            <person name="Walunas T."/>
            <person name="Grechkin Y."/>
            <person name="Pusch G."/>
            <person name="Haselkorn R."/>
            <person name="Fonstein M."/>
            <person name="Ehrlich S.D."/>
            <person name="Overbeek R."/>
            <person name="Kyrpides N.C."/>
        </authorList>
    </citation>
    <scope>NUCLEOTIDE SEQUENCE [LARGE SCALE GENOMIC DNA]</scope>
    <source>
        <strain>ATCC 14579 / DSM 31 / CCUG 7414 / JCM 2152 / NBRC 15305 / NCIMB 9373 / NCTC 2599 / NRRL B-3711</strain>
    </source>
</reference>
<proteinExistence type="inferred from homology"/>
<accession>Q812Y8</accession>